<proteinExistence type="evidence at protein level"/>
<reference key="1">
    <citation type="journal article" date="1996" name="J. Immunol.">
        <title>Definition of a Trichophyton protein associated with delayed hypersensitivity in humans. Evidence for immediate (IgE and IgG4) and delayed hypersensitivity to a single protein.</title>
        <authorList>
            <person name="Woodfolk J.A."/>
            <person name="Slunt J.B."/>
            <person name="Deuell B."/>
            <person name="Hayden M.L."/>
            <person name="Platts-Mills T.A.E."/>
        </authorList>
    </citation>
    <scope>PROTEIN SEQUENCE</scope>
</reference>
<protein>
    <recommendedName>
        <fullName>83 kDa hypersensitivity protein</fullName>
        <shortName>Protein IV</shortName>
    </recommendedName>
</protein>
<comment type="allergen">
    <text>Causes an allergic reaction in human. Causes immediate and delayed hypersensitivity skin reactions in man.</text>
</comment>
<dbReference type="SMR" id="P80514"/>
<dbReference type="Allergome" id="3508">
    <property type="allergen name" value="Tri t 4.0101"/>
</dbReference>
<dbReference type="Allergome" id="655">
    <property type="allergen name" value="Tri t 4"/>
</dbReference>
<organism>
    <name type="scientific">Trichophyton tonsurans</name>
    <name type="common">Scalp ringworm fungus</name>
    <dbReference type="NCBI Taxonomy" id="34387"/>
    <lineage>
        <taxon>Eukaryota</taxon>
        <taxon>Fungi</taxon>
        <taxon>Dikarya</taxon>
        <taxon>Ascomycota</taxon>
        <taxon>Pezizomycotina</taxon>
        <taxon>Eurotiomycetes</taxon>
        <taxon>Eurotiomycetidae</taxon>
        <taxon>Onygenales</taxon>
        <taxon>Arthrodermataceae</taxon>
        <taxon>Trichophyton</taxon>
    </lineage>
</organism>
<keyword id="KW-0020">Allergen</keyword>
<keyword id="KW-0903">Direct protein sequencing</keyword>
<sequence length="26" mass="2860">FTPEDFISAPRRGEAIPDPKGELAVF</sequence>
<feature type="chain" id="PRO_0000084060" description="83 kDa hypersensitivity protein">
    <location>
        <begin position="1"/>
        <end position="26" status="greater than"/>
    </location>
</feature>
<feature type="region of interest" description="Disordered" evidence="1">
    <location>
        <begin position="1"/>
        <end position="26"/>
    </location>
</feature>
<feature type="compositionally biased region" description="Basic and acidic residues" evidence="1">
    <location>
        <begin position="11"/>
        <end position="26"/>
    </location>
</feature>
<feature type="non-terminal residue">
    <location>
        <position position="26"/>
    </location>
</feature>
<name>HR83_TRITO</name>
<accession>P80514</accession>
<evidence type="ECO:0000256" key="1">
    <source>
        <dbReference type="SAM" id="MobiDB-lite"/>
    </source>
</evidence>